<evidence type="ECO:0000255" key="1">
    <source>
        <dbReference type="HAMAP-Rule" id="MF_01225"/>
    </source>
</evidence>
<evidence type="ECO:0000255" key="2">
    <source>
        <dbReference type="PROSITE-ProRule" id="PRU01266"/>
    </source>
</evidence>
<sequence>MLIDSYGRVVDYLRVSVTERCNFRCRYCMPDEPFKDAGHSNVLSYEEMFEFIKICLDNGVKKIRLTGGEPLVRKGVENFVAMINGYKSGLDLAMTTNGYFLAKKAQALKDAGLKRINISLDTLDKTKAHFIARKDVLDNVIEGIETACNLGFGVKINTVALKSVNDNELIYLMDFAKEKGAQIRYIEFMENSHASSELQGLNKDQILDIISKKYNIKEITKSPNSPSSLFELEDGYKFGIIDPHKHDFCSTCNRLRLSAEGLLIPCLYYEDGKSIREAMRAGDIKKACEILNQVLADKPEKNKWENDGKGEISSRAFYQTGG</sequence>
<gene>
    <name evidence="1" type="primary">moaA</name>
    <name type="ordered locus">CFF8240_0221</name>
</gene>
<comment type="function">
    <text evidence="1">Catalyzes the cyclization of GTP to (8S)-3',8-cyclo-7,8-dihydroguanosine 5'-triphosphate.</text>
</comment>
<comment type="catalytic activity">
    <reaction evidence="1">
        <text>GTP + AH2 + S-adenosyl-L-methionine = (8S)-3',8-cyclo-7,8-dihydroguanosine 5'-triphosphate + 5'-deoxyadenosine + L-methionine + A + H(+)</text>
        <dbReference type="Rhea" id="RHEA:49576"/>
        <dbReference type="ChEBI" id="CHEBI:13193"/>
        <dbReference type="ChEBI" id="CHEBI:15378"/>
        <dbReference type="ChEBI" id="CHEBI:17319"/>
        <dbReference type="ChEBI" id="CHEBI:17499"/>
        <dbReference type="ChEBI" id="CHEBI:37565"/>
        <dbReference type="ChEBI" id="CHEBI:57844"/>
        <dbReference type="ChEBI" id="CHEBI:59789"/>
        <dbReference type="ChEBI" id="CHEBI:131766"/>
        <dbReference type="EC" id="4.1.99.22"/>
    </reaction>
</comment>
<comment type="cofactor">
    <cofactor evidence="1">
        <name>[4Fe-4S] cluster</name>
        <dbReference type="ChEBI" id="CHEBI:49883"/>
    </cofactor>
    <text evidence="1">Binds 2 [4Fe-4S] clusters. Binds 1 [4Fe-4S] cluster coordinated with 3 cysteines and an exchangeable S-adenosyl-L-methionine and 1 [4Fe-4S] cluster coordinated with 3 cysteines and the GTP-derived substrate.</text>
</comment>
<comment type="pathway">
    <text evidence="1">Cofactor biosynthesis; molybdopterin biosynthesis.</text>
</comment>
<comment type="subunit">
    <text evidence="1">Monomer and homodimer.</text>
</comment>
<comment type="similarity">
    <text evidence="1">Belongs to the radical SAM superfamily. MoaA family.</text>
</comment>
<name>MOAA_CAMFF</name>
<protein>
    <recommendedName>
        <fullName evidence="1">GTP 3',8-cyclase</fullName>
        <ecNumber evidence="1">4.1.99.22</ecNumber>
    </recommendedName>
    <alternativeName>
        <fullName evidence="1">Molybdenum cofactor biosynthesis protein A</fullName>
    </alternativeName>
</protein>
<dbReference type="EC" id="4.1.99.22" evidence="1"/>
<dbReference type="EMBL" id="CP000487">
    <property type="protein sequence ID" value="ABK82977.1"/>
    <property type="molecule type" value="Genomic_DNA"/>
</dbReference>
<dbReference type="RefSeq" id="WP_002848267.1">
    <property type="nucleotide sequence ID" value="NC_008599.1"/>
</dbReference>
<dbReference type="SMR" id="A0RMJ2"/>
<dbReference type="GeneID" id="61064065"/>
<dbReference type="KEGG" id="cff:CFF8240_0221"/>
<dbReference type="eggNOG" id="COG2896">
    <property type="taxonomic scope" value="Bacteria"/>
</dbReference>
<dbReference type="HOGENOM" id="CLU_009273_0_1_7"/>
<dbReference type="UniPathway" id="UPA00344"/>
<dbReference type="Proteomes" id="UP000000760">
    <property type="component" value="Chromosome"/>
</dbReference>
<dbReference type="GO" id="GO:0051539">
    <property type="term" value="F:4 iron, 4 sulfur cluster binding"/>
    <property type="evidence" value="ECO:0007669"/>
    <property type="project" value="UniProtKB-UniRule"/>
</dbReference>
<dbReference type="GO" id="GO:0061799">
    <property type="term" value="F:cyclic pyranopterin monophosphate synthase activity"/>
    <property type="evidence" value="ECO:0007669"/>
    <property type="project" value="TreeGrafter"/>
</dbReference>
<dbReference type="GO" id="GO:0061798">
    <property type="term" value="F:GTP 3',8'-cyclase activity"/>
    <property type="evidence" value="ECO:0007669"/>
    <property type="project" value="UniProtKB-UniRule"/>
</dbReference>
<dbReference type="GO" id="GO:0005525">
    <property type="term" value="F:GTP binding"/>
    <property type="evidence" value="ECO:0007669"/>
    <property type="project" value="UniProtKB-UniRule"/>
</dbReference>
<dbReference type="GO" id="GO:0046872">
    <property type="term" value="F:metal ion binding"/>
    <property type="evidence" value="ECO:0007669"/>
    <property type="project" value="UniProtKB-KW"/>
</dbReference>
<dbReference type="GO" id="GO:1904047">
    <property type="term" value="F:S-adenosyl-L-methionine binding"/>
    <property type="evidence" value="ECO:0007669"/>
    <property type="project" value="UniProtKB-UniRule"/>
</dbReference>
<dbReference type="GO" id="GO:0006777">
    <property type="term" value="P:Mo-molybdopterin cofactor biosynthetic process"/>
    <property type="evidence" value="ECO:0007669"/>
    <property type="project" value="UniProtKB-UniRule"/>
</dbReference>
<dbReference type="CDD" id="cd01335">
    <property type="entry name" value="Radical_SAM"/>
    <property type="match status" value="1"/>
</dbReference>
<dbReference type="CDD" id="cd21117">
    <property type="entry name" value="Twitch_MoaA"/>
    <property type="match status" value="1"/>
</dbReference>
<dbReference type="Gene3D" id="3.20.20.70">
    <property type="entry name" value="Aldolase class I"/>
    <property type="match status" value="1"/>
</dbReference>
<dbReference type="HAMAP" id="MF_01225_B">
    <property type="entry name" value="MoaA_B"/>
    <property type="match status" value="1"/>
</dbReference>
<dbReference type="InterPro" id="IPR013785">
    <property type="entry name" value="Aldolase_TIM"/>
</dbReference>
<dbReference type="InterPro" id="IPR006638">
    <property type="entry name" value="Elp3/MiaA/NifB-like_rSAM"/>
</dbReference>
<dbReference type="InterPro" id="IPR013483">
    <property type="entry name" value="MoaA"/>
</dbReference>
<dbReference type="InterPro" id="IPR000385">
    <property type="entry name" value="MoaA_NifB_PqqE_Fe-S-bd_CS"/>
</dbReference>
<dbReference type="InterPro" id="IPR010505">
    <property type="entry name" value="MoaA_twitch"/>
</dbReference>
<dbReference type="InterPro" id="IPR050105">
    <property type="entry name" value="MoCo_biosynth_MoaA/MoaC"/>
</dbReference>
<dbReference type="InterPro" id="IPR007197">
    <property type="entry name" value="rSAM"/>
</dbReference>
<dbReference type="NCBIfam" id="TIGR02666">
    <property type="entry name" value="moaA"/>
    <property type="match status" value="1"/>
</dbReference>
<dbReference type="PANTHER" id="PTHR22960:SF0">
    <property type="entry name" value="MOLYBDENUM COFACTOR BIOSYNTHESIS PROTEIN 1"/>
    <property type="match status" value="1"/>
</dbReference>
<dbReference type="PANTHER" id="PTHR22960">
    <property type="entry name" value="MOLYBDOPTERIN COFACTOR SYNTHESIS PROTEIN A"/>
    <property type="match status" value="1"/>
</dbReference>
<dbReference type="Pfam" id="PF13353">
    <property type="entry name" value="Fer4_12"/>
    <property type="match status" value="1"/>
</dbReference>
<dbReference type="Pfam" id="PF06463">
    <property type="entry name" value="Mob_synth_C"/>
    <property type="match status" value="1"/>
</dbReference>
<dbReference type="Pfam" id="PF04055">
    <property type="entry name" value="Radical_SAM"/>
    <property type="match status" value="1"/>
</dbReference>
<dbReference type="SFLD" id="SFLDG01383">
    <property type="entry name" value="cyclic_pyranopterin_phosphate"/>
    <property type="match status" value="1"/>
</dbReference>
<dbReference type="SFLD" id="SFLDG01386">
    <property type="entry name" value="main_SPASM_domain-containing"/>
    <property type="match status" value="1"/>
</dbReference>
<dbReference type="SMART" id="SM00729">
    <property type="entry name" value="Elp3"/>
    <property type="match status" value="1"/>
</dbReference>
<dbReference type="SUPFAM" id="SSF102114">
    <property type="entry name" value="Radical SAM enzymes"/>
    <property type="match status" value="1"/>
</dbReference>
<dbReference type="PROSITE" id="PS01305">
    <property type="entry name" value="MOAA_NIFB_PQQE"/>
    <property type="match status" value="1"/>
</dbReference>
<dbReference type="PROSITE" id="PS51918">
    <property type="entry name" value="RADICAL_SAM"/>
    <property type="match status" value="1"/>
</dbReference>
<proteinExistence type="inferred from homology"/>
<reference key="1">
    <citation type="submission" date="2006-11" db="EMBL/GenBank/DDBJ databases">
        <title>Sequence of Campylobacter fetus subsp. fetus 82-40.</title>
        <authorList>
            <person name="Fouts D.E."/>
            <person name="Nelson K.E."/>
        </authorList>
    </citation>
    <scope>NUCLEOTIDE SEQUENCE [LARGE SCALE GENOMIC DNA]</scope>
    <source>
        <strain>82-40</strain>
    </source>
</reference>
<feature type="chain" id="PRO_1000054180" description="GTP 3',8-cyclase">
    <location>
        <begin position="1"/>
        <end position="322"/>
    </location>
</feature>
<feature type="domain" description="Radical SAM core" evidence="2">
    <location>
        <begin position="5"/>
        <end position="217"/>
    </location>
</feature>
<feature type="binding site" evidence="1">
    <location>
        <position position="14"/>
    </location>
    <ligand>
        <name>GTP</name>
        <dbReference type="ChEBI" id="CHEBI:37565"/>
    </ligand>
</feature>
<feature type="binding site" evidence="1">
    <location>
        <position position="21"/>
    </location>
    <ligand>
        <name>[4Fe-4S] cluster</name>
        <dbReference type="ChEBI" id="CHEBI:49883"/>
        <label>1</label>
        <note>4Fe-4S-S-AdoMet</note>
    </ligand>
</feature>
<feature type="binding site" evidence="1">
    <location>
        <position position="25"/>
    </location>
    <ligand>
        <name>[4Fe-4S] cluster</name>
        <dbReference type="ChEBI" id="CHEBI:49883"/>
        <label>1</label>
        <note>4Fe-4S-S-AdoMet</note>
    </ligand>
</feature>
<feature type="binding site" evidence="1">
    <location>
        <position position="27"/>
    </location>
    <ligand>
        <name>S-adenosyl-L-methionine</name>
        <dbReference type="ChEBI" id="CHEBI:59789"/>
    </ligand>
</feature>
<feature type="binding site" evidence="1">
    <location>
        <position position="28"/>
    </location>
    <ligand>
        <name>[4Fe-4S] cluster</name>
        <dbReference type="ChEBI" id="CHEBI:49883"/>
        <label>1</label>
        <note>4Fe-4S-S-AdoMet</note>
    </ligand>
</feature>
<feature type="binding site" evidence="1">
    <location>
        <position position="64"/>
    </location>
    <ligand>
        <name>GTP</name>
        <dbReference type="ChEBI" id="CHEBI:37565"/>
    </ligand>
</feature>
<feature type="binding site" evidence="1">
    <location>
        <position position="68"/>
    </location>
    <ligand>
        <name>S-adenosyl-L-methionine</name>
        <dbReference type="ChEBI" id="CHEBI:59789"/>
    </ligand>
</feature>
<feature type="binding site" evidence="1">
    <location>
        <position position="95"/>
    </location>
    <ligand>
        <name>GTP</name>
        <dbReference type="ChEBI" id="CHEBI:37565"/>
    </ligand>
</feature>
<feature type="binding site" evidence="1">
    <location>
        <position position="119"/>
    </location>
    <ligand>
        <name>S-adenosyl-L-methionine</name>
        <dbReference type="ChEBI" id="CHEBI:59789"/>
    </ligand>
</feature>
<feature type="binding site" evidence="1">
    <location>
        <position position="155"/>
    </location>
    <ligand>
        <name>GTP</name>
        <dbReference type="ChEBI" id="CHEBI:37565"/>
    </ligand>
</feature>
<feature type="binding site" evidence="1">
    <location>
        <position position="189"/>
    </location>
    <ligand>
        <name>S-adenosyl-L-methionine</name>
        <dbReference type="ChEBI" id="CHEBI:59789"/>
    </ligand>
</feature>
<feature type="binding site" evidence="1">
    <location>
        <position position="249"/>
    </location>
    <ligand>
        <name>[4Fe-4S] cluster</name>
        <dbReference type="ChEBI" id="CHEBI:49883"/>
        <label>2</label>
        <note>4Fe-4S-substrate</note>
    </ligand>
</feature>
<feature type="binding site" evidence="1">
    <location>
        <position position="252"/>
    </location>
    <ligand>
        <name>[4Fe-4S] cluster</name>
        <dbReference type="ChEBI" id="CHEBI:49883"/>
        <label>2</label>
        <note>4Fe-4S-substrate</note>
    </ligand>
</feature>
<feature type="binding site" evidence="1">
    <location>
        <begin position="254"/>
        <end position="256"/>
    </location>
    <ligand>
        <name>GTP</name>
        <dbReference type="ChEBI" id="CHEBI:37565"/>
    </ligand>
</feature>
<feature type="binding site" evidence="1">
    <location>
        <position position="266"/>
    </location>
    <ligand>
        <name>[4Fe-4S] cluster</name>
        <dbReference type="ChEBI" id="CHEBI:49883"/>
        <label>2</label>
        <note>4Fe-4S-substrate</note>
    </ligand>
</feature>
<accession>A0RMJ2</accession>
<keyword id="KW-0004">4Fe-4S</keyword>
<keyword id="KW-0342">GTP-binding</keyword>
<keyword id="KW-0408">Iron</keyword>
<keyword id="KW-0411">Iron-sulfur</keyword>
<keyword id="KW-0456">Lyase</keyword>
<keyword id="KW-0479">Metal-binding</keyword>
<keyword id="KW-0501">Molybdenum cofactor biosynthesis</keyword>
<keyword id="KW-0547">Nucleotide-binding</keyword>
<keyword id="KW-0949">S-adenosyl-L-methionine</keyword>
<organism>
    <name type="scientific">Campylobacter fetus subsp. fetus (strain 82-40)</name>
    <dbReference type="NCBI Taxonomy" id="360106"/>
    <lineage>
        <taxon>Bacteria</taxon>
        <taxon>Pseudomonadati</taxon>
        <taxon>Campylobacterota</taxon>
        <taxon>Epsilonproteobacteria</taxon>
        <taxon>Campylobacterales</taxon>
        <taxon>Campylobacteraceae</taxon>
        <taxon>Campylobacter</taxon>
    </lineage>
</organism>